<comment type="function">
    <text evidence="1">Catalyzes the NADPH-dependent reduction of L-glutamate 5-phosphate into L-glutamate 5-semialdehyde and phosphate. The product spontaneously undergoes cyclization to form 1-pyrroline-5-carboxylate.</text>
</comment>
<comment type="catalytic activity">
    <reaction evidence="1">
        <text>L-glutamate 5-semialdehyde + phosphate + NADP(+) = L-glutamyl 5-phosphate + NADPH + H(+)</text>
        <dbReference type="Rhea" id="RHEA:19541"/>
        <dbReference type="ChEBI" id="CHEBI:15378"/>
        <dbReference type="ChEBI" id="CHEBI:43474"/>
        <dbReference type="ChEBI" id="CHEBI:57783"/>
        <dbReference type="ChEBI" id="CHEBI:58066"/>
        <dbReference type="ChEBI" id="CHEBI:58274"/>
        <dbReference type="ChEBI" id="CHEBI:58349"/>
        <dbReference type="EC" id="1.2.1.41"/>
    </reaction>
</comment>
<comment type="pathway">
    <text evidence="1">Amino-acid biosynthesis; L-proline biosynthesis; L-glutamate 5-semialdehyde from L-glutamate: step 2/2.</text>
</comment>
<comment type="subcellular location">
    <subcellularLocation>
        <location evidence="1">Cytoplasm</location>
    </subcellularLocation>
</comment>
<comment type="similarity">
    <text evidence="1">Belongs to the gamma-glutamyl phosphate reductase family.</text>
</comment>
<evidence type="ECO:0000255" key="1">
    <source>
        <dbReference type="HAMAP-Rule" id="MF_00412"/>
    </source>
</evidence>
<feature type="chain" id="PRO_1000049946" description="Gamma-glutamyl phosphate reductase">
    <location>
        <begin position="1"/>
        <end position="415"/>
    </location>
</feature>
<protein>
    <recommendedName>
        <fullName evidence="1">Gamma-glutamyl phosphate reductase</fullName>
        <shortName evidence="1">GPR</shortName>
        <ecNumber evidence="1">1.2.1.41</ecNumber>
    </recommendedName>
    <alternativeName>
        <fullName evidence="1">Glutamate-5-semialdehyde dehydrogenase</fullName>
    </alternativeName>
    <alternativeName>
        <fullName evidence="1">Glutamyl-gamma-semialdehyde dehydrogenase</fullName>
        <shortName evidence="1">GSA dehydrogenase</shortName>
    </alternativeName>
</protein>
<keyword id="KW-0028">Amino-acid biosynthesis</keyword>
<keyword id="KW-0963">Cytoplasm</keyword>
<keyword id="KW-0521">NADP</keyword>
<keyword id="KW-0560">Oxidoreductase</keyword>
<keyword id="KW-0641">Proline biosynthesis</keyword>
<gene>
    <name evidence="1" type="primary">proA</name>
    <name type="ordered locus">CPR_2582</name>
</gene>
<reference key="1">
    <citation type="journal article" date="2006" name="Genome Res.">
        <title>Skewed genomic variability in strains of the toxigenic bacterial pathogen, Clostridium perfringens.</title>
        <authorList>
            <person name="Myers G.S.A."/>
            <person name="Rasko D.A."/>
            <person name="Cheung J.K."/>
            <person name="Ravel J."/>
            <person name="Seshadri R."/>
            <person name="DeBoy R.T."/>
            <person name="Ren Q."/>
            <person name="Varga J."/>
            <person name="Awad M.M."/>
            <person name="Brinkac L.M."/>
            <person name="Daugherty S.C."/>
            <person name="Haft D.H."/>
            <person name="Dodson R.J."/>
            <person name="Madupu R."/>
            <person name="Nelson W.C."/>
            <person name="Rosovitz M.J."/>
            <person name="Sullivan S.A."/>
            <person name="Khouri H."/>
            <person name="Dimitrov G.I."/>
            <person name="Watkins K.L."/>
            <person name="Mulligan S."/>
            <person name="Benton J."/>
            <person name="Radune D."/>
            <person name="Fisher D.J."/>
            <person name="Atkins H.S."/>
            <person name="Hiscox T."/>
            <person name="Jost B.H."/>
            <person name="Billington S.J."/>
            <person name="Songer J.G."/>
            <person name="McClane B.A."/>
            <person name="Titball R.W."/>
            <person name="Rood J.I."/>
            <person name="Melville S.B."/>
            <person name="Paulsen I.T."/>
        </authorList>
    </citation>
    <scope>NUCLEOTIDE SEQUENCE [LARGE SCALE GENOMIC DNA]</scope>
    <source>
        <strain>SM101 / Type A</strain>
    </source>
</reference>
<dbReference type="EC" id="1.2.1.41" evidence="1"/>
<dbReference type="EMBL" id="CP000312">
    <property type="protein sequence ID" value="ABG86057.1"/>
    <property type="molecule type" value="Genomic_DNA"/>
</dbReference>
<dbReference type="RefSeq" id="WP_011593258.1">
    <property type="nucleotide sequence ID" value="NC_008262.1"/>
</dbReference>
<dbReference type="SMR" id="Q0SPX8"/>
<dbReference type="KEGG" id="cpr:CPR_2582"/>
<dbReference type="UniPathway" id="UPA00098">
    <property type="reaction ID" value="UER00360"/>
</dbReference>
<dbReference type="Proteomes" id="UP000001824">
    <property type="component" value="Chromosome"/>
</dbReference>
<dbReference type="GO" id="GO:0005737">
    <property type="term" value="C:cytoplasm"/>
    <property type="evidence" value="ECO:0007669"/>
    <property type="project" value="UniProtKB-SubCell"/>
</dbReference>
<dbReference type="GO" id="GO:0004350">
    <property type="term" value="F:glutamate-5-semialdehyde dehydrogenase activity"/>
    <property type="evidence" value="ECO:0007669"/>
    <property type="project" value="UniProtKB-UniRule"/>
</dbReference>
<dbReference type="GO" id="GO:0050661">
    <property type="term" value="F:NADP binding"/>
    <property type="evidence" value="ECO:0007669"/>
    <property type="project" value="InterPro"/>
</dbReference>
<dbReference type="GO" id="GO:0055129">
    <property type="term" value="P:L-proline biosynthetic process"/>
    <property type="evidence" value="ECO:0007669"/>
    <property type="project" value="UniProtKB-UniRule"/>
</dbReference>
<dbReference type="CDD" id="cd07079">
    <property type="entry name" value="ALDH_F18-19_ProA-GPR"/>
    <property type="match status" value="1"/>
</dbReference>
<dbReference type="FunFam" id="3.40.309.10:FF:000006">
    <property type="entry name" value="Gamma-glutamyl phosphate reductase"/>
    <property type="match status" value="1"/>
</dbReference>
<dbReference type="Gene3D" id="3.40.605.10">
    <property type="entry name" value="Aldehyde Dehydrogenase, Chain A, domain 1"/>
    <property type="match status" value="1"/>
</dbReference>
<dbReference type="Gene3D" id="3.40.309.10">
    <property type="entry name" value="Aldehyde Dehydrogenase, Chain A, domain 2"/>
    <property type="match status" value="1"/>
</dbReference>
<dbReference type="HAMAP" id="MF_00412">
    <property type="entry name" value="ProA"/>
    <property type="match status" value="1"/>
</dbReference>
<dbReference type="InterPro" id="IPR016161">
    <property type="entry name" value="Ald_DH/histidinol_DH"/>
</dbReference>
<dbReference type="InterPro" id="IPR016163">
    <property type="entry name" value="Ald_DH_C"/>
</dbReference>
<dbReference type="InterPro" id="IPR016162">
    <property type="entry name" value="Ald_DH_N"/>
</dbReference>
<dbReference type="InterPro" id="IPR015590">
    <property type="entry name" value="Aldehyde_DH_dom"/>
</dbReference>
<dbReference type="InterPro" id="IPR020593">
    <property type="entry name" value="G-glutamylP_reductase_CS"/>
</dbReference>
<dbReference type="InterPro" id="IPR012134">
    <property type="entry name" value="Glu-5-SA_DH"/>
</dbReference>
<dbReference type="InterPro" id="IPR000965">
    <property type="entry name" value="GPR_dom"/>
</dbReference>
<dbReference type="NCBIfam" id="NF001221">
    <property type="entry name" value="PRK00197.1"/>
    <property type="match status" value="1"/>
</dbReference>
<dbReference type="NCBIfam" id="TIGR00407">
    <property type="entry name" value="proA"/>
    <property type="match status" value="1"/>
</dbReference>
<dbReference type="PANTHER" id="PTHR11063:SF8">
    <property type="entry name" value="DELTA-1-PYRROLINE-5-CARBOXYLATE SYNTHASE"/>
    <property type="match status" value="1"/>
</dbReference>
<dbReference type="PANTHER" id="PTHR11063">
    <property type="entry name" value="GLUTAMATE SEMIALDEHYDE DEHYDROGENASE"/>
    <property type="match status" value="1"/>
</dbReference>
<dbReference type="Pfam" id="PF00171">
    <property type="entry name" value="Aldedh"/>
    <property type="match status" value="1"/>
</dbReference>
<dbReference type="PIRSF" id="PIRSF000151">
    <property type="entry name" value="GPR"/>
    <property type="match status" value="1"/>
</dbReference>
<dbReference type="SUPFAM" id="SSF53720">
    <property type="entry name" value="ALDH-like"/>
    <property type="match status" value="1"/>
</dbReference>
<dbReference type="PROSITE" id="PS01223">
    <property type="entry name" value="PROA"/>
    <property type="match status" value="1"/>
</dbReference>
<organism>
    <name type="scientific">Clostridium perfringens (strain SM101 / Type A)</name>
    <dbReference type="NCBI Taxonomy" id="289380"/>
    <lineage>
        <taxon>Bacteria</taxon>
        <taxon>Bacillati</taxon>
        <taxon>Bacillota</taxon>
        <taxon>Clostridia</taxon>
        <taxon>Eubacteriales</taxon>
        <taxon>Clostridiaceae</taxon>
        <taxon>Clostridium</taxon>
    </lineage>
</organism>
<sequence length="415" mass="45268">MNNELIIKGKKAKEASYTLSFASTNEKNNGLLKISESLIKRCDEILEENKKDIEKAIEKGTSNAMLDRLKLDEERVKSIANAVADVIKLDDPIGEVTSMFKRPNGLRIGVQRVPLGVVGIIYEARPNVTADAAALCLKTGNAVILRGGSEAINSNLKIVDIISDALKEAGLPEGSVQILEDTSRETATDFMRLNDYLDVLIPRGGAGLIKAVVNNATVPVIETGVGNCHIYIDDEADINMGVDIIVNAKTSRPAVCNAAEKLLVNEKIAEEFLPVAIKALKEKGVEIRGCEKTKVIVNDINLATEEDWGKEYLDYILGVKIVKDLDEAISHINKYGTKHSESIVTKNYFNSEKFLQRVDAAAVYVNASTRFTDGGEFGFGAEIGISTQKLHARGPMGLKELTTNKYIIYGNGQVR</sequence>
<name>PROA_CLOPS</name>
<accession>Q0SPX8</accession>
<proteinExistence type="inferred from homology"/>